<organism>
    <name type="scientific">Escherichia coli O6:K15:H31 (strain 536 / UPEC)</name>
    <dbReference type="NCBI Taxonomy" id="362663"/>
    <lineage>
        <taxon>Bacteria</taxon>
        <taxon>Pseudomonadati</taxon>
        <taxon>Pseudomonadota</taxon>
        <taxon>Gammaproteobacteria</taxon>
        <taxon>Enterobacterales</taxon>
        <taxon>Enterobacteriaceae</taxon>
        <taxon>Escherichia</taxon>
    </lineage>
</organism>
<dbReference type="EC" id="2.4.2.29" evidence="1"/>
<dbReference type="EMBL" id="CP000247">
    <property type="protein sequence ID" value="ABG68496.1"/>
    <property type="molecule type" value="Genomic_DNA"/>
</dbReference>
<dbReference type="RefSeq" id="WP_000667319.1">
    <property type="nucleotide sequence ID" value="NC_008253.1"/>
</dbReference>
<dbReference type="SMR" id="Q0TKN5"/>
<dbReference type="GeneID" id="93777054"/>
<dbReference type="KEGG" id="ecp:ECP_0465"/>
<dbReference type="HOGENOM" id="CLU_022060_0_1_6"/>
<dbReference type="UniPathway" id="UPA00392"/>
<dbReference type="Proteomes" id="UP000009182">
    <property type="component" value="Chromosome"/>
</dbReference>
<dbReference type="GO" id="GO:0005829">
    <property type="term" value="C:cytosol"/>
    <property type="evidence" value="ECO:0007669"/>
    <property type="project" value="TreeGrafter"/>
</dbReference>
<dbReference type="GO" id="GO:0046872">
    <property type="term" value="F:metal ion binding"/>
    <property type="evidence" value="ECO:0007669"/>
    <property type="project" value="UniProtKB-KW"/>
</dbReference>
<dbReference type="GO" id="GO:0008479">
    <property type="term" value="F:tRNA-guanosine(34) queuine transglycosylase activity"/>
    <property type="evidence" value="ECO:0007669"/>
    <property type="project" value="UniProtKB-UniRule"/>
</dbReference>
<dbReference type="GO" id="GO:0008616">
    <property type="term" value="P:queuosine biosynthetic process"/>
    <property type="evidence" value="ECO:0007669"/>
    <property type="project" value="UniProtKB-UniRule"/>
</dbReference>
<dbReference type="GO" id="GO:0002099">
    <property type="term" value="P:tRNA wobble guanine modification"/>
    <property type="evidence" value="ECO:0007669"/>
    <property type="project" value="TreeGrafter"/>
</dbReference>
<dbReference type="GO" id="GO:0101030">
    <property type="term" value="P:tRNA-guanine transglycosylation"/>
    <property type="evidence" value="ECO:0007669"/>
    <property type="project" value="InterPro"/>
</dbReference>
<dbReference type="FunFam" id="3.20.20.105:FF:000001">
    <property type="entry name" value="Queuine tRNA-ribosyltransferase"/>
    <property type="match status" value="1"/>
</dbReference>
<dbReference type="Gene3D" id="3.20.20.105">
    <property type="entry name" value="Queuine tRNA-ribosyltransferase-like"/>
    <property type="match status" value="1"/>
</dbReference>
<dbReference type="HAMAP" id="MF_00168">
    <property type="entry name" value="Q_tRNA_Tgt"/>
    <property type="match status" value="1"/>
</dbReference>
<dbReference type="InterPro" id="IPR050076">
    <property type="entry name" value="ArchSynthase1/Queuine_TRR"/>
</dbReference>
<dbReference type="InterPro" id="IPR004803">
    <property type="entry name" value="TGT"/>
</dbReference>
<dbReference type="InterPro" id="IPR036511">
    <property type="entry name" value="TGT-like_sf"/>
</dbReference>
<dbReference type="InterPro" id="IPR002616">
    <property type="entry name" value="tRNA_ribo_trans-like"/>
</dbReference>
<dbReference type="NCBIfam" id="TIGR00430">
    <property type="entry name" value="Q_tRNA_tgt"/>
    <property type="match status" value="1"/>
</dbReference>
<dbReference type="NCBIfam" id="TIGR00449">
    <property type="entry name" value="tgt_general"/>
    <property type="match status" value="1"/>
</dbReference>
<dbReference type="PANTHER" id="PTHR46499">
    <property type="entry name" value="QUEUINE TRNA-RIBOSYLTRANSFERASE"/>
    <property type="match status" value="1"/>
</dbReference>
<dbReference type="PANTHER" id="PTHR46499:SF1">
    <property type="entry name" value="QUEUINE TRNA-RIBOSYLTRANSFERASE"/>
    <property type="match status" value="1"/>
</dbReference>
<dbReference type="Pfam" id="PF01702">
    <property type="entry name" value="TGT"/>
    <property type="match status" value="1"/>
</dbReference>
<dbReference type="SUPFAM" id="SSF51713">
    <property type="entry name" value="tRNA-guanine transglycosylase"/>
    <property type="match status" value="1"/>
</dbReference>
<gene>
    <name evidence="1" type="primary">tgt</name>
    <name type="ordered locus">ECP_0465</name>
</gene>
<keyword id="KW-0328">Glycosyltransferase</keyword>
<keyword id="KW-0479">Metal-binding</keyword>
<keyword id="KW-0671">Queuosine biosynthesis</keyword>
<keyword id="KW-0808">Transferase</keyword>
<keyword id="KW-0819">tRNA processing</keyword>
<keyword id="KW-0862">Zinc</keyword>
<feature type="chain" id="PRO_1000016788" description="Queuine tRNA-ribosyltransferase">
    <location>
        <begin position="1"/>
        <end position="375"/>
    </location>
</feature>
<feature type="region of interest" description="RNA binding" evidence="1">
    <location>
        <begin position="245"/>
        <end position="251"/>
    </location>
</feature>
<feature type="region of interest" description="RNA binding; important for wobble base 34 recognition" evidence="1">
    <location>
        <begin position="269"/>
        <end position="273"/>
    </location>
</feature>
<feature type="active site" description="Proton acceptor" evidence="1">
    <location>
        <position position="89"/>
    </location>
</feature>
<feature type="active site" description="Nucleophile" evidence="1">
    <location>
        <position position="264"/>
    </location>
</feature>
<feature type="binding site" evidence="1">
    <location>
        <begin position="89"/>
        <end position="93"/>
    </location>
    <ligand>
        <name>substrate</name>
    </ligand>
</feature>
<feature type="binding site" evidence="1">
    <location>
        <position position="143"/>
    </location>
    <ligand>
        <name>substrate</name>
    </ligand>
</feature>
<feature type="binding site" evidence="1">
    <location>
        <position position="187"/>
    </location>
    <ligand>
        <name>substrate</name>
    </ligand>
</feature>
<feature type="binding site" evidence="1">
    <location>
        <position position="214"/>
    </location>
    <ligand>
        <name>substrate</name>
    </ligand>
</feature>
<feature type="binding site" evidence="1">
    <location>
        <position position="302"/>
    </location>
    <ligand>
        <name>Zn(2+)</name>
        <dbReference type="ChEBI" id="CHEBI:29105"/>
    </ligand>
</feature>
<feature type="binding site" evidence="1">
    <location>
        <position position="304"/>
    </location>
    <ligand>
        <name>Zn(2+)</name>
        <dbReference type="ChEBI" id="CHEBI:29105"/>
    </ligand>
</feature>
<feature type="binding site" evidence="1">
    <location>
        <position position="307"/>
    </location>
    <ligand>
        <name>Zn(2+)</name>
        <dbReference type="ChEBI" id="CHEBI:29105"/>
    </ligand>
</feature>
<feature type="binding site" evidence="1">
    <location>
        <position position="333"/>
    </location>
    <ligand>
        <name>Zn(2+)</name>
        <dbReference type="ChEBI" id="CHEBI:29105"/>
    </ligand>
</feature>
<evidence type="ECO:0000255" key="1">
    <source>
        <dbReference type="HAMAP-Rule" id="MF_00168"/>
    </source>
</evidence>
<proteinExistence type="inferred from homology"/>
<name>TGT_ECOL5</name>
<sequence>MKFELDTTDGRARRGRLVFDRGVVETPCFMPVGTYGTVKGMTPEEVEATGAQIILGNTFHLWLRPGQEIMKLHGDLHDFMQWKGPILTDSGGFQVFSLGDIRKITEQGVHFRNPINGDPIFLDPEKSMEIQYDLGSDIVMIFDECTPYPADWDYAKRSMEMSLRWAKRSRERFDSLGNKNALFGIIQGSVYEDLRDISVKGLVDIGFDGYAVGGLAVGEPKADMHRILEHVCPQIPADKPRYLMGVGKPEDLVEGVRRGIDMFDCVMPTRNARNGHLFVTDGVVKIRNAKYKSDTGPLDPECDCYTCRNYSRAYLHHLDRCNEILGARLNTIHNLRYYQRLMAGLRKAIEEGKLESFVTDFYQRQGREVPPLNVD</sequence>
<accession>Q0TKN5</accession>
<reference key="1">
    <citation type="journal article" date="2006" name="Mol. Microbiol.">
        <title>Role of pathogenicity island-associated integrases in the genome plasticity of uropathogenic Escherichia coli strain 536.</title>
        <authorList>
            <person name="Hochhut B."/>
            <person name="Wilde C."/>
            <person name="Balling G."/>
            <person name="Middendorf B."/>
            <person name="Dobrindt U."/>
            <person name="Brzuszkiewicz E."/>
            <person name="Gottschalk G."/>
            <person name="Carniel E."/>
            <person name="Hacker J."/>
        </authorList>
    </citation>
    <scope>NUCLEOTIDE SEQUENCE [LARGE SCALE GENOMIC DNA]</scope>
    <source>
        <strain>536 / UPEC</strain>
    </source>
</reference>
<protein>
    <recommendedName>
        <fullName evidence="1">Queuine tRNA-ribosyltransferase</fullName>
        <ecNumber evidence="1">2.4.2.29</ecNumber>
    </recommendedName>
    <alternativeName>
        <fullName evidence="1">Guanine insertion enzyme</fullName>
    </alternativeName>
    <alternativeName>
        <fullName evidence="1">tRNA-guanine transglycosylase</fullName>
    </alternativeName>
</protein>
<comment type="function">
    <text evidence="1">Catalyzes the base-exchange of a guanine (G) residue with the queuine precursor 7-aminomethyl-7-deazaguanine (PreQ1) at position 34 (anticodon wobble position) in tRNAs with GU(N) anticodons (tRNA-Asp, -Asn, -His and -Tyr). Catalysis occurs through a double-displacement mechanism. The nucleophile active site attacks the C1' of nucleotide 34 to detach the guanine base from the RNA, forming a covalent enzyme-RNA intermediate. The proton acceptor active site deprotonates the incoming PreQ1, allowing a nucleophilic attack on the C1' of the ribose to form the product. After dissociation, two additional enzymatic reactions on the tRNA convert PreQ1 to queuine (Q), resulting in the hypermodified nucleoside queuosine (7-(((4,5-cis-dihydroxy-2-cyclopenten-1-yl)amino)methyl)-7-deazaguanosine).</text>
</comment>
<comment type="catalytic activity">
    <reaction evidence="1">
        <text>7-aminomethyl-7-carbaguanine + guanosine(34) in tRNA = 7-aminomethyl-7-carbaguanosine(34) in tRNA + guanine</text>
        <dbReference type="Rhea" id="RHEA:24104"/>
        <dbReference type="Rhea" id="RHEA-COMP:10341"/>
        <dbReference type="Rhea" id="RHEA-COMP:10342"/>
        <dbReference type="ChEBI" id="CHEBI:16235"/>
        <dbReference type="ChEBI" id="CHEBI:58703"/>
        <dbReference type="ChEBI" id="CHEBI:74269"/>
        <dbReference type="ChEBI" id="CHEBI:82833"/>
        <dbReference type="EC" id="2.4.2.29"/>
    </reaction>
</comment>
<comment type="cofactor">
    <cofactor evidence="1">
        <name>Zn(2+)</name>
        <dbReference type="ChEBI" id="CHEBI:29105"/>
    </cofactor>
    <text evidence="1">Binds 1 zinc ion per subunit.</text>
</comment>
<comment type="pathway">
    <text evidence="1">tRNA modification; tRNA-queuosine biosynthesis.</text>
</comment>
<comment type="subunit">
    <text evidence="1">Homodimer. Within each dimer, one monomer is responsible for RNA recognition and catalysis, while the other monomer binds to the replacement base PreQ1.</text>
</comment>
<comment type="similarity">
    <text evidence="1">Belongs to the queuine tRNA-ribosyltransferase family.</text>
</comment>